<gene>
    <name type="primary">ywaC</name>
    <name type="ordered locus">BSU38480</name>
    <name type="ORF">ipa-7d</name>
</gene>
<accession>P39583</accession>
<sequence>MDLSVTHMDDLKTVMEDWKNELLVYKFALDALDTKFSIISQEYNLIHGHNPIEHTKSRVKSFESIVNKLMRKGCEITTKEMKEHIHDIAGVRIICSFISDIYNVVNVLKQHEDLRIVKVKDYIQTPKPNGYRSLHLIIEMPVNLTNRVEYVKAEIQIRTIAMDFWASLEHKIYYKLNNDVPKQLTDELKEAAEIAHYLDEKMLGIKKEVD</sequence>
<feature type="chain" id="PRO_0000049949" description="GTP pyrophosphokinase YwaC">
    <location>
        <begin position="1"/>
        <end position="210"/>
    </location>
</feature>
<feature type="mutagenesis site" description="No longer inhibits growth when overexpressed in relA mutants, probably does not synthesisize (p)ppGpp. 70S ribosomes no longer dimerize to form 100S ribosomes." evidence="3">
    <original>D</original>
    <variation>G</variation>
    <location>
        <position position="87"/>
    </location>
</feature>
<feature type="mutagenesis site" description="No longer inhibits growth when overexpressed in relA mutants." evidence="3">
    <original>L</original>
    <variation>F</variation>
    <location>
        <position position="176"/>
    </location>
</feature>
<feature type="helix" evidence="6">
    <location>
        <begin position="18"/>
        <end position="41"/>
    </location>
</feature>
<feature type="strand" evidence="6">
    <location>
        <begin position="52"/>
        <end position="59"/>
    </location>
</feature>
<feature type="helix" evidence="6">
    <location>
        <begin position="62"/>
        <end position="69"/>
    </location>
</feature>
<feature type="strand" evidence="6">
    <location>
        <begin position="89"/>
        <end position="97"/>
    </location>
</feature>
<feature type="helix" evidence="6">
    <location>
        <begin position="98"/>
        <end position="109"/>
    </location>
</feature>
<feature type="strand" evidence="6">
    <location>
        <begin position="115"/>
        <end position="121"/>
    </location>
</feature>
<feature type="strand" evidence="6">
    <location>
        <begin position="123"/>
        <end position="125"/>
    </location>
</feature>
<feature type="strand" evidence="6">
    <location>
        <begin position="134"/>
        <end position="143"/>
    </location>
</feature>
<feature type="strand" evidence="6">
    <location>
        <begin position="148"/>
        <end position="158"/>
    </location>
</feature>
<feature type="helix" evidence="6">
    <location>
        <begin position="160"/>
        <end position="176"/>
    </location>
</feature>
<feature type="helix" evidence="6">
    <location>
        <begin position="182"/>
        <end position="207"/>
    </location>
</feature>
<comment type="function">
    <text evidence="2 3">Functions as a (p)ppGpp synthase; GDP can be used instead of GTP, resulting in an increase of (p)ppGpp synthesis (PubMed:18067544). Overexpression in relA mutants (triple relA-yjbM-ywaC deletions and single relA deletions) leads to growth arrest; GTP levels fall drastically, various guanine-related nucleotides are synthesized (ppGp or pGpp), the cellular transcriptional profile changes dramatically and 70S ribosome dimerization occurs (PubMed:22950019). Overexpression in the presence of a wild-type relA gene does not have these effects (PubMed:22950019). In eubacteria ppGpp (guanosine 3'-diphosphate 5'-diphosphate) is a mediator of the stringent response that coordinates a variety of cellular activities in response to changes in nutritional abundance. activities in response to changes in nutritional abundance. YwaC has probably a minor role in stringent response (PubMed:18067544).</text>
</comment>
<comment type="catalytic activity">
    <reaction>
        <text>GTP + ATP = guanosine 3'-diphosphate 5'-triphosphate + AMP</text>
        <dbReference type="Rhea" id="RHEA:22088"/>
        <dbReference type="ChEBI" id="CHEBI:30616"/>
        <dbReference type="ChEBI" id="CHEBI:37565"/>
        <dbReference type="ChEBI" id="CHEBI:142410"/>
        <dbReference type="ChEBI" id="CHEBI:456215"/>
        <dbReference type="EC" id="2.7.6.5"/>
    </reaction>
</comment>
<comment type="pathway">
    <text>Purine metabolism; ppGpp biosynthesis; ppGpp from GTP: step 1/2.</text>
</comment>
<comment type="subunit">
    <text evidence="1">Homotetramer.</text>
</comment>
<comment type="induction">
    <text evidence="2 3">Weakly expressed during exponential growth with a marked and transient increase at the onset of the stationary phase (PubMed:18067544). Protein expression is very low during the first 3.5 hours after inoculation (at protein level) (PubMed:22950019). Induced by alkaline shock (PubMed:18067544).</text>
</comment>
<comment type="disruption phenotype">
    <text evidence="2">No visible phenotype, double yjbM-ywaC and triple relA-yjbM-ywaC mutants are also viable (PubMed:18067544).</text>
</comment>
<comment type="miscellaneous">
    <text evidence="2">The synthase activity of YwaC is weaker than that of YjbM (PubMed:18067544).</text>
</comment>
<comment type="similarity">
    <text evidence="5">Belongs to the RelA/SpoT family.</text>
</comment>
<reference key="1">
    <citation type="journal article" date="1993" name="Mol. Microbiol.">
        <title>Bacillus subtilis genome project: cloning and sequencing of the 97 kb region from 325 degrees to 333 degrees.</title>
        <authorList>
            <person name="Glaser P."/>
            <person name="Kunst F."/>
            <person name="Arnaud M."/>
            <person name="Coudart M.P."/>
            <person name="Gonzales W."/>
            <person name="Hullo M.-F."/>
            <person name="Ionescu M."/>
            <person name="Lubochinsky B."/>
            <person name="Marcelino L."/>
            <person name="Moszer I."/>
            <person name="Presecan E."/>
            <person name="Santana M."/>
            <person name="Schneider E."/>
            <person name="Schweizer J."/>
            <person name="Vertes A."/>
            <person name="Rapoport G."/>
            <person name="Danchin A."/>
        </authorList>
    </citation>
    <scope>NUCLEOTIDE SEQUENCE [GENOMIC DNA]</scope>
    <source>
        <strain>168</strain>
    </source>
</reference>
<reference key="2">
    <citation type="journal article" date="1997" name="Nature">
        <title>The complete genome sequence of the Gram-positive bacterium Bacillus subtilis.</title>
        <authorList>
            <person name="Kunst F."/>
            <person name="Ogasawara N."/>
            <person name="Moszer I."/>
            <person name="Albertini A.M."/>
            <person name="Alloni G."/>
            <person name="Azevedo V."/>
            <person name="Bertero M.G."/>
            <person name="Bessieres P."/>
            <person name="Bolotin A."/>
            <person name="Borchert S."/>
            <person name="Borriss R."/>
            <person name="Boursier L."/>
            <person name="Brans A."/>
            <person name="Braun M."/>
            <person name="Brignell S.C."/>
            <person name="Bron S."/>
            <person name="Brouillet S."/>
            <person name="Bruschi C.V."/>
            <person name="Caldwell B."/>
            <person name="Capuano V."/>
            <person name="Carter N.M."/>
            <person name="Choi S.-K."/>
            <person name="Codani J.-J."/>
            <person name="Connerton I.F."/>
            <person name="Cummings N.J."/>
            <person name="Daniel R.A."/>
            <person name="Denizot F."/>
            <person name="Devine K.M."/>
            <person name="Duesterhoeft A."/>
            <person name="Ehrlich S.D."/>
            <person name="Emmerson P.T."/>
            <person name="Entian K.-D."/>
            <person name="Errington J."/>
            <person name="Fabret C."/>
            <person name="Ferrari E."/>
            <person name="Foulger D."/>
            <person name="Fritz C."/>
            <person name="Fujita M."/>
            <person name="Fujita Y."/>
            <person name="Fuma S."/>
            <person name="Galizzi A."/>
            <person name="Galleron N."/>
            <person name="Ghim S.-Y."/>
            <person name="Glaser P."/>
            <person name="Goffeau A."/>
            <person name="Golightly E.J."/>
            <person name="Grandi G."/>
            <person name="Guiseppi G."/>
            <person name="Guy B.J."/>
            <person name="Haga K."/>
            <person name="Haiech J."/>
            <person name="Harwood C.R."/>
            <person name="Henaut A."/>
            <person name="Hilbert H."/>
            <person name="Holsappel S."/>
            <person name="Hosono S."/>
            <person name="Hullo M.-F."/>
            <person name="Itaya M."/>
            <person name="Jones L.-M."/>
            <person name="Joris B."/>
            <person name="Karamata D."/>
            <person name="Kasahara Y."/>
            <person name="Klaerr-Blanchard M."/>
            <person name="Klein C."/>
            <person name="Kobayashi Y."/>
            <person name="Koetter P."/>
            <person name="Koningstein G."/>
            <person name="Krogh S."/>
            <person name="Kumano M."/>
            <person name="Kurita K."/>
            <person name="Lapidus A."/>
            <person name="Lardinois S."/>
            <person name="Lauber J."/>
            <person name="Lazarevic V."/>
            <person name="Lee S.-M."/>
            <person name="Levine A."/>
            <person name="Liu H."/>
            <person name="Masuda S."/>
            <person name="Mauel C."/>
            <person name="Medigue C."/>
            <person name="Medina N."/>
            <person name="Mellado R.P."/>
            <person name="Mizuno M."/>
            <person name="Moestl D."/>
            <person name="Nakai S."/>
            <person name="Noback M."/>
            <person name="Noone D."/>
            <person name="O'Reilly M."/>
            <person name="Ogawa K."/>
            <person name="Ogiwara A."/>
            <person name="Oudega B."/>
            <person name="Park S.-H."/>
            <person name="Parro V."/>
            <person name="Pohl T.M."/>
            <person name="Portetelle D."/>
            <person name="Porwollik S."/>
            <person name="Prescott A.M."/>
            <person name="Presecan E."/>
            <person name="Pujic P."/>
            <person name="Purnelle B."/>
            <person name="Rapoport G."/>
            <person name="Rey M."/>
            <person name="Reynolds S."/>
            <person name="Rieger M."/>
            <person name="Rivolta C."/>
            <person name="Rocha E."/>
            <person name="Roche B."/>
            <person name="Rose M."/>
            <person name="Sadaie Y."/>
            <person name="Sato T."/>
            <person name="Scanlan E."/>
            <person name="Schleich S."/>
            <person name="Schroeter R."/>
            <person name="Scoffone F."/>
            <person name="Sekiguchi J."/>
            <person name="Sekowska A."/>
            <person name="Seror S.J."/>
            <person name="Serror P."/>
            <person name="Shin B.-S."/>
            <person name="Soldo B."/>
            <person name="Sorokin A."/>
            <person name="Tacconi E."/>
            <person name="Takagi T."/>
            <person name="Takahashi H."/>
            <person name="Takemaru K."/>
            <person name="Takeuchi M."/>
            <person name="Tamakoshi A."/>
            <person name="Tanaka T."/>
            <person name="Terpstra P."/>
            <person name="Tognoni A."/>
            <person name="Tosato V."/>
            <person name="Uchiyama S."/>
            <person name="Vandenbol M."/>
            <person name="Vannier F."/>
            <person name="Vassarotti A."/>
            <person name="Viari A."/>
            <person name="Wambutt R."/>
            <person name="Wedler E."/>
            <person name="Wedler H."/>
            <person name="Weitzenegger T."/>
            <person name="Winters P."/>
            <person name="Wipat A."/>
            <person name="Yamamoto H."/>
            <person name="Yamane K."/>
            <person name="Yasumoto K."/>
            <person name="Yata K."/>
            <person name="Yoshida K."/>
            <person name="Yoshikawa H.-F."/>
            <person name="Zumstein E."/>
            <person name="Yoshikawa H."/>
            <person name="Danchin A."/>
        </authorList>
    </citation>
    <scope>NUCLEOTIDE SEQUENCE [LARGE SCALE GENOMIC DNA]</scope>
    <source>
        <strain>168</strain>
    </source>
</reference>
<reference key="3">
    <citation type="journal article" date="2008" name="Mol. Microbiol.">
        <title>Identification and functional analysis of novel (p)ppGpp synthetase genes in Bacillus subtilis.</title>
        <authorList>
            <person name="Nanamiya H."/>
            <person name="Kasai K."/>
            <person name="Nozawa A."/>
            <person name="Yun C.S."/>
            <person name="Narisawa T."/>
            <person name="Murakami K."/>
            <person name="Natori Y."/>
            <person name="Kawamura F."/>
            <person name="Tozawa Y."/>
        </authorList>
    </citation>
    <scope>FUNCTION AS A (P)PPGPP SYNTHASE</scope>
    <scope>INDUCTION</scope>
    <scope>DISRUPTION PHENOTYPE</scope>
    <source>
        <strain>168</strain>
    </source>
</reference>
<reference key="4">
    <citation type="journal article" date="2012" name="MicrobiologyOpen">
        <title>Expression of a small (p)ppGpp synthetase, YwaC, in the (p)ppGpp(0) mutant of Bacillus subtilis triggers YvyD-dependent dimerization of ribosome.</title>
        <authorList>
            <person name="Tagami K."/>
            <person name="Nanamiya H."/>
            <person name="Kazo Y."/>
            <person name="Maehashi M."/>
            <person name="Suzuki S."/>
            <person name="Namba E."/>
            <person name="Hoshiya M."/>
            <person name="Hanai R."/>
            <person name="Tozawa Y."/>
            <person name="Morimoto T."/>
            <person name="Ogasawara N."/>
            <person name="Kageyama Y."/>
            <person name="Ara K."/>
            <person name="Ozaki K."/>
            <person name="Yoshida M."/>
            <person name="Kuroiwa H."/>
            <person name="Kuroiwa T."/>
            <person name="Ohashi Y."/>
            <person name="Kawamura F."/>
        </authorList>
    </citation>
    <scope>FUNCTION</scope>
    <scope>MUTAGENESIS OF ASP-87 AND LEU-176</scope>
    <source>
        <strain>168</strain>
    </source>
</reference>
<proteinExistence type="evidence at protein level"/>
<organism>
    <name type="scientific">Bacillus subtilis (strain 168)</name>
    <dbReference type="NCBI Taxonomy" id="224308"/>
    <lineage>
        <taxon>Bacteria</taxon>
        <taxon>Bacillati</taxon>
        <taxon>Bacillota</taxon>
        <taxon>Bacilli</taxon>
        <taxon>Bacillales</taxon>
        <taxon>Bacillaceae</taxon>
        <taxon>Bacillus</taxon>
    </lineage>
</organism>
<keyword id="KW-0002">3D-structure</keyword>
<keyword id="KW-0067">ATP-binding</keyword>
<keyword id="KW-0342">GTP-binding</keyword>
<keyword id="KW-0418">Kinase</keyword>
<keyword id="KW-0547">Nucleotide-binding</keyword>
<keyword id="KW-1185">Reference proteome</keyword>
<keyword id="KW-0808">Transferase</keyword>
<evidence type="ECO:0000250" key="1">
    <source>
        <dbReference type="UniProtKB" id="O31611"/>
    </source>
</evidence>
<evidence type="ECO:0000269" key="2">
    <source>
    </source>
</evidence>
<evidence type="ECO:0000269" key="3">
    <source>
    </source>
</evidence>
<evidence type="ECO:0000303" key="4">
    <source>
    </source>
</evidence>
<evidence type="ECO:0000305" key="5"/>
<evidence type="ECO:0007829" key="6">
    <source>
        <dbReference type="PDB" id="6FGK"/>
    </source>
</evidence>
<protein>
    <recommendedName>
        <fullName>GTP pyrophosphokinase YwaC</fullName>
        <ecNumber>2.7.6.5</ecNumber>
    </recommendedName>
    <alternativeName>
        <fullName>(p)ppGpp synthase YwaC</fullName>
    </alternativeName>
    <alternativeName>
        <fullName evidence="4">Small alarmone synthase 2</fullName>
        <shortName evidence="4">SAS 2</shortName>
    </alternativeName>
</protein>
<name>YWAC_BACSU</name>
<dbReference type="EC" id="2.7.6.5"/>
<dbReference type="EMBL" id="X73124">
    <property type="protein sequence ID" value="CAA51563.1"/>
    <property type="molecule type" value="Genomic_DNA"/>
</dbReference>
<dbReference type="EMBL" id="AL009126">
    <property type="protein sequence ID" value="CAB15874.1"/>
    <property type="molecule type" value="Genomic_DNA"/>
</dbReference>
<dbReference type="PIR" id="S39662">
    <property type="entry name" value="S39662"/>
</dbReference>
<dbReference type="RefSeq" id="WP_003244564.1">
    <property type="nucleotide sequence ID" value="NZ_OZ025638.1"/>
</dbReference>
<dbReference type="PDB" id="6FGK">
    <property type="method" value="X-ray"/>
    <property type="resolution" value="3.20 A"/>
    <property type="chains" value="A/B/C/D=1-210"/>
</dbReference>
<dbReference type="PDBsum" id="6FGK"/>
<dbReference type="SMR" id="P39583"/>
<dbReference type="FunCoup" id="P39583">
    <property type="interactions" value="77"/>
</dbReference>
<dbReference type="IntAct" id="P39583">
    <property type="interactions" value="1"/>
</dbReference>
<dbReference type="STRING" id="224308.BSU38480"/>
<dbReference type="PaxDb" id="224308-BSU38480"/>
<dbReference type="EnsemblBacteria" id="CAB15874">
    <property type="protein sequence ID" value="CAB15874"/>
    <property type="gene ID" value="BSU_38480"/>
</dbReference>
<dbReference type="GeneID" id="937355"/>
<dbReference type="KEGG" id="bsu:BSU38480"/>
<dbReference type="PATRIC" id="fig|224308.179.peg.4165"/>
<dbReference type="eggNOG" id="COG2357">
    <property type="taxonomic scope" value="Bacteria"/>
</dbReference>
<dbReference type="InParanoid" id="P39583"/>
<dbReference type="OrthoDB" id="9789634at2"/>
<dbReference type="PhylomeDB" id="P39583"/>
<dbReference type="BioCyc" id="BSUB:BSU38480-MONOMER"/>
<dbReference type="BRENDA" id="2.7.6.5">
    <property type="organism ID" value="658"/>
</dbReference>
<dbReference type="UniPathway" id="UPA00908">
    <property type="reaction ID" value="UER00884"/>
</dbReference>
<dbReference type="Proteomes" id="UP000001570">
    <property type="component" value="Chromosome"/>
</dbReference>
<dbReference type="GO" id="GO:0005524">
    <property type="term" value="F:ATP binding"/>
    <property type="evidence" value="ECO:0007669"/>
    <property type="project" value="UniProtKB-KW"/>
</dbReference>
<dbReference type="GO" id="GO:0005525">
    <property type="term" value="F:GTP binding"/>
    <property type="evidence" value="ECO:0007669"/>
    <property type="project" value="UniProtKB-KW"/>
</dbReference>
<dbReference type="GO" id="GO:0008728">
    <property type="term" value="F:GTP diphosphokinase activity"/>
    <property type="evidence" value="ECO:0007669"/>
    <property type="project" value="UniProtKB-EC"/>
</dbReference>
<dbReference type="GO" id="GO:0016301">
    <property type="term" value="F:kinase activity"/>
    <property type="evidence" value="ECO:0007669"/>
    <property type="project" value="UniProtKB-KW"/>
</dbReference>
<dbReference type="GO" id="GO:0015970">
    <property type="term" value="P:guanosine tetraphosphate biosynthetic process"/>
    <property type="evidence" value="ECO:0007669"/>
    <property type="project" value="UniProtKB-UniPathway"/>
</dbReference>
<dbReference type="CDD" id="cd05399">
    <property type="entry name" value="NT_Rel-Spo_like"/>
    <property type="match status" value="1"/>
</dbReference>
<dbReference type="FunFam" id="3.30.460.10:FF:000012">
    <property type="entry name" value="GTP pyrophosphokinase YjbM"/>
    <property type="match status" value="1"/>
</dbReference>
<dbReference type="Gene3D" id="3.30.460.10">
    <property type="entry name" value="Beta Polymerase, domain 2"/>
    <property type="match status" value="1"/>
</dbReference>
<dbReference type="Gene3D" id="1.10.287.860">
    <property type="entry name" value="Nucleotidyltransferase"/>
    <property type="match status" value="1"/>
</dbReference>
<dbReference type="InterPro" id="IPR052366">
    <property type="entry name" value="GTP_Pyrophosphokinase"/>
</dbReference>
<dbReference type="InterPro" id="IPR043519">
    <property type="entry name" value="NT_sf"/>
</dbReference>
<dbReference type="InterPro" id="IPR007685">
    <property type="entry name" value="RelA_SpoT"/>
</dbReference>
<dbReference type="PANTHER" id="PTHR47837">
    <property type="entry name" value="GTP PYROPHOSPHOKINASE YJBM"/>
    <property type="match status" value="1"/>
</dbReference>
<dbReference type="PANTHER" id="PTHR47837:SF2">
    <property type="entry name" value="GTP PYROPHOSPHOKINASE YWAC"/>
    <property type="match status" value="1"/>
</dbReference>
<dbReference type="Pfam" id="PF04607">
    <property type="entry name" value="RelA_SpoT"/>
    <property type="match status" value="1"/>
</dbReference>
<dbReference type="SMART" id="SM00954">
    <property type="entry name" value="RelA_SpoT"/>
    <property type="match status" value="1"/>
</dbReference>
<dbReference type="SUPFAM" id="SSF81301">
    <property type="entry name" value="Nucleotidyltransferase"/>
    <property type="match status" value="1"/>
</dbReference>